<organism>
    <name type="scientific">Streptococcus pyogenes serotype M5 (strain Manfredo)</name>
    <dbReference type="NCBI Taxonomy" id="160491"/>
    <lineage>
        <taxon>Bacteria</taxon>
        <taxon>Bacillati</taxon>
        <taxon>Bacillota</taxon>
        <taxon>Bacilli</taxon>
        <taxon>Lactobacillales</taxon>
        <taxon>Streptococcaceae</taxon>
        <taxon>Streptococcus</taxon>
    </lineage>
</organism>
<keyword id="KW-0687">Ribonucleoprotein</keyword>
<keyword id="KW-0689">Ribosomal protein</keyword>
<keyword id="KW-0694">RNA-binding</keyword>
<keyword id="KW-0699">rRNA-binding</keyword>
<reference key="1">
    <citation type="journal article" date="2007" name="J. Bacteriol.">
        <title>Complete genome of acute rheumatic fever-associated serotype M5 Streptococcus pyogenes strain Manfredo.</title>
        <authorList>
            <person name="Holden M.T.G."/>
            <person name="Scott A."/>
            <person name="Cherevach I."/>
            <person name="Chillingworth T."/>
            <person name="Churcher C."/>
            <person name="Cronin A."/>
            <person name="Dowd L."/>
            <person name="Feltwell T."/>
            <person name="Hamlin N."/>
            <person name="Holroyd S."/>
            <person name="Jagels K."/>
            <person name="Moule S."/>
            <person name="Mungall K."/>
            <person name="Quail M.A."/>
            <person name="Price C."/>
            <person name="Rabbinowitsch E."/>
            <person name="Sharp S."/>
            <person name="Skelton J."/>
            <person name="Whitehead S."/>
            <person name="Barrell B.G."/>
            <person name="Kehoe M."/>
            <person name="Parkhill J."/>
        </authorList>
    </citation>
    <scope>NUCLEOTIDE SEQUENCE [LARGE SCALE GENOMIC DNA]</scope>
    <source>
        <strain>Manfredo</strain>
    </source>
</reference>
<name>RS17_STRPG</name>
<evidence type="ECO:0000255" key="1">
    <source>
        <dbReference type="HAMAP-Rule" id="MF_01345"/>
    </source>
</evidence>
<evidence type="ECO:0000305" key="2"/>
<sequence length="86" mass="10091">MERNQRKTLYGRVVSDKMDKTITVVVETKRNHPVYGKRINYSKKYKAHDENNVAKEGDIVRIMETRPLSATKRFRLVEVVEEAVII</sequence>
<protein>
    <recommendedName>
        <fullName evidence="1">Small ribosomal subunit protein uS17</fullName>
    </recommendedName>
    <alternativeName>
        <fullName evidence="2">30S ribosomal protein S17</fullName>
    </alternativeName>
</protein>
<dbReference type="EMBL" id="AM295007">
    <property type="protein sequence ID" value="CAM29395.1"/>
    <property type="molecule type" value="Genomic_DNA"/>
</dbReference>
<dbReference type="RefSeq" id="WP_011184078.1">
    <property type="nucleotide sequence ID" value="NC_009332.1"/>
</dbReference>
<dbReference type="SMR" id="A2RC23"/>
<dbReference type="KEGG" id="spf:SpyM50053"/>
<dbReference type="HOGENOM" id="CLU_073626_1_0_9"/>
<dbReference type="GO" id="GO:0022627">
    <property type="term" value="C:cytosolic small ribosomal subunit"/>
    <property type="evidence" value="ECO:0007669"/>
    <property type="project" value="TreeGrafter"/>
</dbReference>
<dbReference type="GO" id="GO:0019843">
    <property type="term" value="F:rRNA binding"/>
    <property type="evidence" value="ECO:0007669"/>
    <property type="project" value="UniProtKB-UniRule"/>
</dbReference>
<dbReference type="GO" id="GO:0003735">
    <property type="term" value="F:structural constituent of ribosome"/>
    <property type="evidence" value="ECO:0007669"/>
    <property type="project" value="InterPro"/>
</dbReference>
<dbReference type="GO" id="GO:0006412">
    <property type="term" value="P:translation"/>
    <property type="evidence" value="ECO:0007669"/>
    <property type="project" value="UniProtKB-UniRule"/>
</dbReference>
<dbReference type="CDD" id="cd00364">
    <property type="entry name" value="Ribosomal_uS17"/>
    <property type="match status" value="1"/>
</dbReference>
<dbReference type="FunFam" id="2.40.50.140:FF:000026">
    <property type="entry name" value="30S ribosomal protein S17"/>
    <property type="match status" value="1"/>
</dbReference>
<dbReference type="Gene3D" id="2.40.50.140">
    <property type="entry name" value="Nucleic acid-binding proteins"/>
    <property type="match status" value="1"/>
</dbReference>
<dbReference type="HAMAP" id="MF_01345_B">
    <property type="entry name" value="Ribosomal_uS17_B"/>
    <property type="match status" value="1"/>
</dbReference>
<dbReference type="InterPro" id="IPR012340">
    <property type="entry name" value="NA-bd_OB-fold"/>
</dbReference>
<dbReference type="InterPro" id="IPR000266">
    <property type="entry name" value="Ribosomal_uS17"/>
</dbReference>
<dbReference type="InterPro" id="IPR019984">
    <property type="entry name" value="Ribosomal_uS17_bact/chlr"/>
</dbReference>
<dbReference type="InterPro" id="IPR019979">
    <property type="entry name" value="Ribosomal_uS17_CS"/>
</dbReference>
<dbReference type="NCBIfam" id="NF004123">
    <property type="entry name" value="PRK05610.1"/>
    <property type="match status" value="1"/>
</dbReference>
<dbReference type="NCBIfam" id="TIGR03635">
    <property type="entry name" value="uS17_bact"/>
    <property type="match status" value="1"/>
</dbReference>
<dbReference type="PANTHER" id="PTHR10744">
    <property type="entry name" value="40S RIBOSOMAL PROTEIN S11 FAMILY MEMBER"/>
    <property type="match status" value="1"/>
</dbReference>
<dbReference type="PANTHER" id="PTHR10744:SF1">
    <property type="entry name" value="SMALL RIBOSOMAL SUBUNIT PROTEIN US17M"/>
    <property type="match status" value="1"/>
</dbReference>
<dbReference type="Pfam" id="PF00366">
    <property type="entry name" value="Ribosomal_S17"/>
    <property type="match status" value="1"/>
</dbReference>
<dbReference type="PRINTS" id="PR00973">
    <property type="entry name" value="RIBOSOMALS17"/>
</dbReference>
<dbReference type="SUPFAM" id="SSF50249">
    <property type="entry name" value="Nucleic acid-binding proteins"/>
    <property type="match status" value="1"/>
</dbReference>
<dbReference type="PROSITE" id="PS00056">
    <property type="entry name" value="RIBOSOMAL_S17"/>
    <property type="match status" value="1"/>
</dbReference>
<comment type="function">
    <text evidence="1">One of the primary rRNA binding proteins, it binds specifically to the 5'-end of 16S ribosomal RNA.</text>
</comment>
<comment type="subunit">
    <text evidence="1">Part of the 30S ribosomal subunit.</text>
</comment>
<comment type="similarity">
    <text evidence="1">Belongs to the universal ribosomal protein uS17 family.</text>
</comment>
<feature type="chain" id="PRO_1000055031" description="Small ribosomal subunit protein uS17">
    <location>
        <begin position="1"/>
        <end position="86"/>
    </location>
</feature>
<accession>A2RC23</accession>
<gene>
    <name evidence="1" type="primary">rpsQ</name>
    <name type="ordered locus">SpyM50053</name>
</gene>
<proteinExistence type="inferred from homology"/>